<evidence type="ECO:0000255" key="1">
    <source>
        <dbReference type="HAMAP-Rule" id="MF_01864"/>
    </source>
</evidence>
<evidence type="ECO:0000255" key="2">
    <source>
        <dbReference type="PROSITE-ProRule" id="PRU01266"/>
    </source>
</evidence>
<accession>A9KCP2</accession>
<reference key="1">
    <citation type="journal article" date="2009" name="Infect. Immun.">
        <title>Comparative genomics reveal extensive transposon-mediated genomic plasticity and diversity among potential effector proteins within the genus Coxiella.</title>
        <authorList>
            <person name="Beare P.A."/>
            <person name="Unsworth N."/>
            <person name="Andoh M."/>
            <person name="Voth D.E."/>
            <person name="Omsland A."/>
            <person name="Gilk S.D."/>
            <person name="Williams K.P."/>
            <person name="Sobral B.W."/>
            <person name="Kupko J.J. III"/>
            <person name="Porcella S.F."/>
            <person name="Samuel J.E."/>
            <person name="Heinzen R.A."/>
        </authorList>
    </citation>
    <scope>NUCLEOTIDE SEQUENCE [LARGE SCALE GENOMIC DNA]</scope>
    <source>
        <strain>Dugway 5J108-111</strain>
    </source>
</reference>
<keyword id="KW-0004">4Fe-4S</keyword>
<keyword id="KW-0963">Cytoplasm</keyword>
<keyword id="KW-0408">Iron</keyword>
<keyword id="KW-0411">Iron-sulfur</keyword>
<keyword id="KW-0479">Metal-binding</keyword>
<keyword id="KW-0949">S-adenosyl-L-methionine</keyword>
<keyword id="KW-0808">Transferase</keyword>
<keyword id="KW-0819">tRNA processing</keyword>
<protein>
    <recommendedName>
        <fullName evidence="1">tRNA-2-methylthio-N(6)-dimethylallyladenosine synthase</fullName>
        <ecNumber evidence="1">2.8.4.3</ecNumber>
    </recommendedName>
    <alternativeName>
        <fullName evidence="1">(Dimethylallyl)adenosine tRNA methylthiotransferase MiaB</fullName>
    </alternativeName>
    <alternativeName>
        <fullName evidence="1">tRNA-i(6)A37 methylthiotransferase</fullName>
    </alternativeName>
</protein>
<dbReference type="EC" id="2.8.4.3" evidence="1"/>
<dbReference type="EMBL" id="CP000733">
    <property type="protein sequence ID" value="ABS76755.1"/>
    <property type="molecule type" value="Genomic_DNA"/>
</dbReference>
<dbReference type="RefSeq" id="WP_011997114.1">
    <property type="nucleotide sequence ID" value="NC_009727.1"/>
</dbReference>
<dbReference type="SMR" id="A9KCP2"/>
<dbReference type="KEGG" id="cbd:CBUD_1494"/>
<dbReference type="HOGENOM" id="CLU_018697_2_0_6"/>
<dbReference type="Proteomes" id="UP000008555">
    <property type="component" value="Chromosome"/>
</dbReference>
<dbReference type="GO" id="GO:0005829">
    <property type="term" value="C:cytosol"/>
    <property type="evidence" value="ECO:0007669"/>
    <property type="project" value="TreeGrafter"/>
</dbReference>
<dbReference type="GO" id="GO:0051539">
    <property type="term" value="F:4 iron, 4 sulfur cluster binding"/>
    <property type="evidence" value="ECO:0007669"/>
    <property type="project" value="UniProtKB-UniRule"/>
</dbReference>
<dbReference type="GO" id="GO:0046872">
    <property type="term" value="F:metal ion binding"/>
    <property type="evidence" value="ECO:0007669"/>
    <property type="project" value="UniProtKB-KW"/>
</dbReference>
<dbReference type="GO" id="GO:0035597">
    <property type="term" value="F:N6-isopentenyladenosine methylthiotransferase activity"/>
    <property type="evidence" value="ECO:0007669"/>
    <property type="project" value="TreeGrafter"/>
</dbReference>
<dbReference type="CDD" id="cd01335">
    <property type="entry name" value="Radical_SAM"/>
    <property type="match status" value="1"/>
</dbReference>
<dbReference type="FunFam" id="3.40.50.12160:FF:000001">
    <property type="entry name" value="tRNA-2-methylthio-N(6)-dimethylallyladenosine synthase"/>
    <property type="match status" value="1"/>
</dbReference>
<dbReference type="FunFam" id="3.80.30.20:FF:000001">
    <property type="entry name" value="tRNA-2-methylthio-N(6)-dimethylallyladenosine synthase 2"/>
    <property type="match status" value="1"/>
</dbReference>
<dbReference type="Gene3D" id="3.40.50.12160">
    <property type="entry name" value="Methylthiotransferase, N-terminal domain"/>
    <property type="match status" value="1"/>
</dbReference>
<dbReference type="Gene3D" id="3.80.30.20">
    <property type="entry name" value="tm_1862 like domain"/>
    <property type="match status" value="1"/>
</dbReference>
<dbReference type="HAMAP" id="MF_01864">
    <property type="entry name" value="tRNA_metthiotr_MiaB"/>
    <property type="match status" value="1"/>
</dbReference>
<dbReference type="InterPro" id="IPR006638">
    <property type="entry name" value="Elp3/MiaA/NifB-like_rSAM"/>
</dbReference>
<dbReference type="InterPro" id="IPR005839">
    <property type="entry name" value="Methylthiotransferase"/>
</dbReference>
<dbReference type="InterPro" id="IPR020612">
    <property type="entry name" value="Methylthiotransferase_CS"/>
</dbReference>
<dbReference type="InterPro" id="IPR013848">
    <property type="entry name" value="Methylthiotransferase_N"/>
</dbReference>
<dbReference type="InterPro" id="IPR038135">
    <property type="entry name" value="Methylthiotransferase_N_sf"/>
</dbReference>
<dbReference type="InterPro" id="IPR006463">
    <property type="entry name" value="MiaB_methiolase"/>
</dbReference>
<dbReference type="InterPro" id="IPR007197">
    <property type="entry name" value="rSAM"/>
</dbReference>
<dbReference type="InterPro" id="IPR023404">
    <property type="entry name" value="rSAM_horseshoe"/>
</dbReference>
<dbReference type="InterPro" id="IPR002792">
    <property type="entry name" value="TRAM_dom"/>
</dbReference>
<dbReference type="NCBIfam" id="TIGR01574">
    <property type="entry name" value="miaB-methiolase"/>
    <property type="match status" value="1"/>
</dbReference>
<dbReference type="NCBIfam" id="TIGR00089">
    <property type="entry name" value="MiaB/RimO family radical SAM methylthiotransferase"/>
    <property type="match status" value="1"/>
</dbReference>
<dbReference type="PANTHER" id="PTHR43020">
    <property type="entry name" value="CDK5 REGULATORY SUBUNIT-ASSOCIATED PROTEIN 1"/>
    <property type="match status" value="1"/>
</dbReference>
<dbReference type="PANTHER" id="PTHR43020:SF2">
    <property type="entry name" value="MITOCHONDRIAL TRNA METHYLTHIOTRANSFERASE CDK5RAP1"/>
    <property type="match status" value="1"/>
</dbReference>
<dbReference type="Pfam" id="PF04055">
    <property type="entry name" value="Radical_SAM"/>
    <property type="match status" value="1"/>
</dbReference>
<dbReference type="Pfam" id="PF01938">
    <property type="entry name" value="TRAM"/>
    <property type="match status" value="1"/>
</dbReference>
<dbReference type="Pfam" id="PF00919">
    <property type="entry name" value="UPF0004"/>
    <property type="match status" value="1"/>
</dbReference>
<dbReference type="SFLD" id="SFLDF00273">
    <property type="entry name" value="(dimethylallyl)adenosine_tRNA"/>
    <property type="match status" value="1"/>
</dbReference>
<dbReference type="SFLD" id="SFLDG01082">
    <property type="entry name" value="B12-binding_domain_containing"/>
    <property type="match status" value="1"/>
</dbReference>
<dbReference type="SFLD" id="SFLDS00029">
    <property type="entry name" value="Radical_SAM"/>
    <property type="match status" value="1"/>
</dbReference>
<dbReference type="SMART" id="SM00729">
    <property type="entry name" value="Elp3"/>
    <property type="match status" value="1"/>
</dbReference>
<dbReference type="SUPFAM" id="SSF102114">
    <property type="entry name" value="Radical SAM enzymes"/>
    <property type="match status" value="1"/>
</dbReference>
<dbReference type="PROSITE" id="PS51449">
    <property type="entry name" value="MTTASE_N"/>
    <property type="match status" value="1"/>
</dbReference>
<dbReference type="PROSITE" id="PS01278">
    <property type="entry name" value="MTTASE_RADICAL"/>
    <property type="match status" value="1"/>
</dbReference>
<dbReference type="PROSITE" id="PS51918">
    <property type="entry name" value="RADICAL_SAM"/>
    <property type="match status" value="1"/>
</dbReference>
<dbReference type="PROSITE" id="PS50926">
    <property type="entry name" value="TRAM"/>
    <property type="match status" value="1"/>
</dbReference>
<gene>
    <name evidence="1" type="primary">miaB</name>
    <name type="ordered locus">CBUD_1494</name>
</gene>
<sequence length="439" mass="49123">MKKLYLKTHGCQMNEYDSAKMADVLKFSHGLELTEDPAVADVFLLNTCSVREKAQTKVFSELGRWRPFKEKRPHVVIGVGGCVASQEGETILKQAPFVDIVFGPQTLHRLPDLLDSVIQKRKSVVDITFPEIEKFDRLPQPRAEGPSAFVSIMEGCSKYCTFCVVPYTRGEEISRPFDDVIAEVASLCEQGVREITLLGQNVNDYCGLMHDGQVADLALLIHYLAAMDNIERIRFTTSHPSAFSENLIDAYAEEPKLANHLHLPVQSGSDRILAAMKRNYTVLEYKSKIRKLRAVRPDISLSSDFIIGFPGETDADFEATMNLIHDMGFDHSFSFIYSPRPGTPAAQLPDDVPMAVKKERLAILQNRINVKAAEISQSMVGTQQRILVTGPSKKYPDQLSGRTENNRVVNFNGDTPLIGQMVTIKIKEARPYSLWGEIC</sequence>
<organism>
    <name type="scientific">Coxiella burnetii (strain Dugway 5J108-111)</name>
    <dbReference type="NCBI Taxonomy" id="434922"/>
    <lineage>
        <taxon>Bacteria</taxon>
        <taxon>Pseudomonadati</taxon>
        <taxon>Pseudomonadota</taxon>
        <taxon>Gammaproteobacteria</taxon>
        <taxon>Legionellales</taxon>
        <taxon>Coxiellaceae</taxon>
        <taxon>Coxiella</taxon>
    </lineage>
</organism>
<proteinExistence type="inferred from homology"/>
<comment type="function">
    <text evidence="1">Catalyzes the methylthiolation of N6-(dimethylallyl)adenosine (i(6)A), leading to the formation of 2-methylthio-N6-(dimethylallyl)adenosine (ms(2)i(6)A) at position 37 in tRNAs that read codons beginning with uridine.</text>
</comment>
<comment type="catalytic activity">
    <reaction evidence="1">
        <text>N(6)-dimethylallyladenosine(37) in tRNA + (sulfur carrier)-SH + AH2 + 2 S-adenosyl-L-methionine = 2-methylsulfanyl-N(6)-dimethylallyladenosine(37) in tRNA + (sulfur carrier)-H + 5'-deoxyadenosine + L-methionine + A + S-adenosyl-L-homocysteine + 2 H(+)</text>
        <dbReference type="Rhea" id="RHEA:37067"/>
        <dbReference type="Rhea" id="RHEA-COMP:10375"/>
        <dbReference type="Rhea" id="RHEA-COMP:10376"/>
        <dbReference type="Rhea" id="RHEA-COMP:14737"/>
        <dbReference type="Rhea" id="RHEA-COMP:14739"/>
        <dbReference type="ChEBI" id="CHEBI:13193"/>
        <dbReference type="ChEBI" id="CHEBI:15378"/>
        <dbReference type="ChEBI" id="CHEBI:17319"/>
        <dbReference type="ChEBI" id="CHEBI:17499"/>
        <dbReference type="ChEBI" id="CHEBI:29917"/>
        <dbReference type="ChEBI" id="CHEBI:57844"/>
        <dbReference type="ChEBI" id="CHEBI:57856"/>
        <dbReference type="ChEBI" id="CHEBI:59789"/>
        <dbReference type="ChEBI" id="CHEBI:64428"/>
        <dbReference type="ChEBI" id="CHEBI:74415"/>
        <dbReference type="ChEBI" id="CHEBI:74417"/>
        <dbReference type="EC" id="2.8.4.3"/>
    </reaction>
</comment>
<comment type="cofactor">
    <cofactor evidence="1">
        <name>[4Fe-4S] cluster</name>
        <dbReference type="ChEBI" id="CHEBI:49883"/>
    </cofactor>
    <text evidence="1">Binds 2 [4Fe-4S] clusters. One cluster is coordinated with 3 cysteines and an exchangeable S-adenosyl-L-methionine.</text>
</comment>
<comment type="subunit">
    <text evidence="1">Monomer.</text>
</comment>
<comment type="subcellular location">
    <subcellularLocation>
        <location evidence="1">Cytoplasm</location>
    </subcellularLocation>
</comment>
<comment type="similarity">
    <text evidence="1">Belongs to the methylthiotransferase family. MiaB subfamily.</text>
</comment>
<feature type="chain" id="PRO_0000374247" description="tRNA-2-methylthio-N(6)-dimethylallyladenosine synthase">
    <location>
        <begin position="1"/>
        <end position="439"/>
    </location>
</feature>
<feature type="domain" description="MTTase N-terminal" evidence="1">
    <location>
        <begin position="2"/>
        <end position="119"/>
    </location>
</feature>
<feature type="domain" description="Radical SAM core" evidence="2">
    <location>
        <begin position="142"/>
        <end position="374"/>
    </location>
</feature>
<feature type="domain" description="TRAM" evidence="1">
    <location>
        <begin position="377"/>
        <end position="439"/>
    </location>
</feature>
<feature type="binding site" evidence="1">
    <location>
        <position position="11"/>
    </location>
    <ligand>
        <name>[4Fe-4S] cluster</name>
        <dbReference type="ChEBI" id="CHEBI:49883"/>
        <label>1</label>
    </ligand>
</feature>
<feature type="binding site" evidence="1">
    <location>
        <position position="48"/>
    </location>
    <ligand>
        <name>[4Fe-4S] cluster</name>
        <dbReference type="ChEBI" id="CHEBI:49883"/>
        <label>1</label>
    </ligand>
</feature>
<feature type="binding site" evidence="1">
    <location>
        <position position="82"/>
    </location>
    <ligand>
        <name>[4Fe-4S] cluster</name>
        <dbReference type="ChEBI" id="CHEBI:49883"/>
        <label>1</label>
    </ligand>
</feature>
<feature type="binding site" evidence="1">
    <location>
        <position position="156"/>
    </location>
    <ligand>
        <name>[4Fe-4S] cluster</name>
        <dbReference type="ChEBI" id="CHEBI:49883"/>
        <label>2</label>
        <note>4Fe-4S-S-AdoMet</note>
    </ligand>
</feature>
<feature type="binding site" evidence="1">
    <location>
        <position position="160"/>
    </location>
    <ligand>
        <name>[4Fe-4S] cluster</name>
        <dbReference type="ChEBI" id="CHEBI:49883"/>
        <label>2</label>
        <note>4Fe-4S-S-AdoMet</note>
    </ligand>
</feature>
<feature type="binding site" evidence="1">
    <location>
        <position position="163"/>
    </location>
    <ligand>
        <name>[4Fe-4S] cluster</name>
        <dbReference type="ChEBI" id="CHEBI:49883"/>
        <label>2</label>
        <note>4Fe-4S-S-AdoMet</note>
    </ligand>
</feature>
<name>MIAB_COXBN</name>